<protein>
    <recommendedName>
        <fullName>Protein HdeD</fullName>
    </recommendedName>
</protein>
<sequence>MLYIDKATILKFDLEMLKKHRRAIQFIAVLLFIVGLLCISFPFVSGDILSTVVGALLICSGIALIVGLFSNRSHNFWPVLSGFLVAVAYLLIGYFFIRAPELGIFAIAAFIAGLFCVAGVIRLMSWYRQRSMKGSWLQLVIGVLDIVIAWIFLGATPMVSVTLVSTLVGIELIFSAASLFSFASLFVKQQ</sequence>
<comment type="subcellular location">
    <subcellularLocation>
        <location>Cell inner membrane</location>
        <topology>Multi-pass membrane protein</topology>
    </subcellularLocation>
</comment>
<comment type="sequence caution" evidence="2">
    <conflict type="erroneous initiation">
        <sequence resource="EMBL-CDS" id="BAA01882"/>
    </conflict>
</comment>
<name>HDED_ECOLI</name>
<evidence type="ECO:0000255" key="1"/>
<evidence type="ECO:0000305" key="2"/>
<gene>
    <name type="primary">hdeD</name>
    <name type="synonym">yhiA</name>
    <name type="ordered locus">b3511</name>
    <name type="ordered locus">JW3479</name>
</gene>
<organism>
    <name type="scientific">Escherichia coli (strain K12)</name>
    <dbReference type="NCBI Taxonomy" id="83333"/>
    <lineage>
        <taxon>Bacteria</taxon>
        <taxon>Pseudomonadati</taxon>
        <taxon>Pseudomonadota</taxon>
        <taxon>Gammaproteobacteria</taxon>
        <taxon>Enterobacterales</taxon>
        <taxon>Enterobacteriaceae</taxon>
        <taxon>Escherichia</taxon>
    </lineage>
</organism>
<feature type="chain" id="PRO_0000083935" description="Protein HdeD">
    <location>
        <begin position="1"/>
        <end position="190"/>
    </location>
</feature>
<feature type="topological domain" description="Cytoplasmic" evidence="1">
    <location>
        <begin position="1"/>
        <end position="25"/>
    </location>
</feature>
<feature type="transmembrane region" description="Helical" evidence="1">
    <location>
        <begin position="26"/>
        <end position="44"/>
    </location>
</feature>
<feature type="topological domain" description="Periplasmic" evidence="1">
    <location>
        <begin position="45"/>
        <end position="47"/>
    </location>
</feature>
<feature type="transmembrane region" description="Helical" evidence="1">
    <location>
        <begin position="48"/>
        <end position="70"/>
    </location>
</feature>
<feature type="topological domain" description="Cytoplasmic" evidence="1">
    <location>
        <begin position="71"/>
        <end position="76"/>
    </location>
</feature>
<feature type="transmembrane region" description="Helical" evidence="1">
    <location>
        <begin position="77"/>
        <end position="99"/>
    </location>
</feature>
<feature type="topological domain" description="Periplasmic" evidence="1">
    <location>
        <begin position="100"/>
        <end position="103"/>
    </location>
</feature>
<feature type="transmembrane region" description="Helical" evidence="1">
    <location>
        <begin position="104"/>
        <end position="126"/>
    </location>
</feature>
<feature type="topological domain" description="Cytoplasmic" evidence="1">
    <location>
        <begin position="127"/>
        <end position="138"/>
    </location>
</feature>
<feature type="transmembrane region" description="Helical" evidence="1">
    <location>
        <begin position="139"/>
        <end position="161"/>
    </location>
</feature>
<feature type="topological domain" description="Periplasmic" evidence="1">
    <location>
        <begin position="162"/>
        <end position="164"/>
    </location>
</feature>
<feature type="transmembrane region" description="Helical" evidence="1">
    <location>
        <begin position="165"/>
        <end position="187"/>
    </location>
</feature>
<feature type="topological domain" description="Cytoplasmic" evidence="1">
    <location>
        <begin position="188"/>
        <end position="190"/>
    </location>
</feature>
<accession>P0AET5</accession>
<accession>P26603</accession>
<accession>P28326</accession>
<accession>Q2M7H3</accession>
<dbReference type="EMBL" id="D11389">
    <property type="protein sequence ID" value="BAA01985.1"/>
    <property type="molecule type" value="Genomic_DNA"/>
</dbReference>
<dbReference type="EMBL" id="U00039">
    <property type="protein sequence ID" value="AAB18487.1"/>
    <property type="molecule type" value="Genomic_DNA"/>
</dbReference>
<dbReference type="EMBL" id="U00096">
    <property type="protein sequence ID" value="AAC76536.1"/>
    <property type="molecule type" value="Genomic_DNA"/>
</dbReference>
<dbReference type="EMBL" id="AP009048">
    <property type="protein sequence ID" value="BAE77783.1"/>
    <property type="molecule type" value="Genomic_DNA"/>
</dbReference>
<dbReference type="EMBL" id="D11109">
    <property type="protein sequence ID" value="BAA01882.1"/>
    <property type="status" value="ALT_INIT"/>
    <property type="molecule type" value="Genomic_DNA"/>
</dbReference>
<dbReference type="PIR" id="S47731">
    <property type="entry name" value="S47731"/>
</dbReference>
<dbReference type="RefSeq" id="NP_417968.1">
    <property type="nucleotide sequence ID" value="NC_000913.3"/>
</dbReference>
<dbReference type="RefSeq" id="WP_000965672.1">
    <property type="nucleotide sequence ID" value="NZ_STEB01000046.1"/>
</dbReference>
<dbReference type="SMR" id="P0AET5"/>
<dbReference type="BioGRID" id="4259561">
    <property type="interactions" value="5"/>
</dbReference>
<dbReference type="DIP" id="DIP-48170N"/>
<dbReference type="FunCoup" id="P0AET5">
    <property type="interactions" value="86"/>
</dbReference>
<dbReference type="IntAct" id="P0AET5">
    <property type="interactions" value="1"/>
</dbReference>
<dbReference type="STRING" id="511145.b3511"/>
<dbReference type="TCDB" id="9.B.36.1.1">
    <property type="family name" value="the acid resistance membrane protein (hded) family"/>
</dbReference>
<dbReference type="jPOST" id="P0AET5"/>
<dbReference type="PaxDb" id="511145-b3511"/>
<dbReference type="EnsemblBacteria" id="AAC76536">
    <property type="protein sequence ID" value="AAC76536"/>
    <property type="gene ID" value="b3511"/>
</dbReference>
<dbReference type="GeneID" id="93778474"/>
<dbReference type="GeneID" id="948024"/>
<dbReference type="KEGG" id="ecj:JW3479"/>
<dbReference type="KEGG" id="eco:b3511"/>
<dbReference type="KEGG" id="ecoc:C3026_19020"/>
<dbReference type="PATRIC" id="fig|1411691.4.peg.3208"/>
<dbReference type="EchoBASE" id="EB1458"/>
<dbReference type="eggNOG" id="COG3247">
    <property type="taxonomic scope" value="Bacteria"/>
</dbReference>
<dbReference type="HOGENOM" id="CLU_091585_6_0_6"/>
<dbReference type="InParanoid" id="P0AET5"/>
<dbReference type="OMA" id="VRGPQFG"/>
<dbReference type="OrthoDB" id="6591996at2"/>
<dbReference type="PhylomeDB" id="P0AET5"/>
<dbReference type="BioCyc" id="EcoCyc:EG11495-MONOMER"/>
<dbReference type="PRO" id="PR:P0AET5"/>
<dbReference type="Proteomes" id="UP000000625">
    <property type="component" value="Chromosome"/>
</dbReference>
<dbReference type="GO" id="GO:0005886">
    <property type="term" value="C:plasma membrane"/>
    <property type="evidence" value="ECO:0000314"/>
    <property type="project" value="EcoCyc"/>
</dbReference>
<dbReference type="GO" id="GO:0009268">
    <property type="term" value="P:response to pH"/>
    <property type="evidence" value="ECO:0000315"/>
    <property type="project" value="EcoCyc"/>
</dbReference>
<dbReference type="InterPro" id="IPR052712">
    <property type="entry name" value="Acid_resist_chaperone_HdeD"/>
</dbReference>
<dbReference type="InterPro" id="IPR005325">
    <property type="entry name" value="DUF308_memb"/>
</dbReference>
<dbReference type="NCBIfam" id="NF007577">
    <property type="entry name" value="PRK10209.1"/>
    <property type="match status" value="1"/>
</dbReference>
<dbReference type="PANTHER" id="PTHR34989">
    <property type="entry name" value="PROTEIN HDED"/>
    <property type="match status" value="1"/>
</dbReference>
<dbReference type="PANTHER" id="PTHR34989:SF1">
    <property type="entry name" value="PROTEIN HDED"/>
    <property type="match status" value="1"/>
</dbReference>
<dbReference type="Pfam" id="PF03729">
    <property type="entry name" value="DUF308"/>
    <property type="match status" value="2"/>
</dbReference>
<keyword id="KW-0997">Cell inner membrane</keyword>
<keyword id="KW-1003">Cell membrane</keyword>
<keyword id="KW-0472">Membrane</keyword>
<keyword id="KW-1185">Reference proteome</keyword>
<keyword id="KW-0812">Transmembrane</keyword>
<keyword id="KW-1133">Transmembrane helix</keyword>
<reference key="1">
    <citation type="journal article" date="1993" name="J. Bacteriol.">
        <title>Physical map location of a set of Escherichia coli genes (hde) whose expression is affected by the nucleoid protein H-NS.</title>
        <authorList>
            <person name="Yoshida T."/>
            <person name="Ueguchi C."/>
            <person name="Mizuno T."/>
        </authorList>
    </citation>
    <scope>NUCLEOTIDE SEQUENCE [GENOMIC DNA]</scope>
    <source>
        <strain>K12</strain>
    </source>
</reference>
<reference key="2">
    <citation type="journal article" date="1994" name="Nucleic Acids Res.">
        <title>Analysis of the Escherichia coli genome. V. DNA sequence of the region from 76.0 to 81.5 minutes.</title>
        <authorList>
            <person name="Sofia H.J."/>
            <person name="Burland V."/>
            <person name="Daniels D.L."/>
            <person name="Plunkett G. III"/>
            <person name="Blattner F.R."/>
        </authorList>
    </citation>
    <scope>NUCLEOTIDE SEQUENCE [LARGE SCALE GENOMIC DNA]</scope>
    <source>
        <strain>K12 / MG1655 / ATCC 47076</strain>
    </source>
</reference>
<reference key="3">
    <citation type="journal article" date="1997" name="Science">
        <title>The complete genome sequence of Escherichia coli K-12.</title>
        <authorList>
            <person name="Blattner F.R."/>
            <person name="Plunkett G. III"/>
            <person name="Bloch C.A."/>
            <person name="Perna N.T."/>
            <person name="Burland V."/>
            <person name="Riley M."/>
            <person name="Collado-Vides J."/>
            <person name="Glasner J.D."/>
            <person name="Rode C.K."/>
            <person name="Mayhew G.F."/>
            <person name="Gregor J."/>
            <person name="Davis N.W."/>
            <person name="Kirkpatrick H.A."/>
            <person name="Goeden M.A."/>
            <person name="Rose D.J."/>
            <person name="Mau B."/>
            <person name="Shao Y."/>
        </authorList>
    </citation>
    <scope>NUCLEOTIDE SEQUENCE [LARGE SCALE GENOMIC DNA]</scope>
    <source>
        <strain>K12 / MG1655 / ATCC 47076</strain>
    </source>
</reference>
<reference key="4">
    <citation type="journal article" date="2006" name="Mol. Syst. Biol.">
        <title>Highly accurate genome sequences of Escherichia coli K-12 strains MG1655 and W3110.</title>
        <authorList>
            <person name="Hayashi K."/>
            <person name="Morooka N."/>
            <person name="Yamamoto Y."/>
            <person name="Fujita K."/>
            <person name="Isono K."/>
            <person name="Choi S."/>
            <person name="Ohtsubo E."/>
            <person name="Baba T."/>
            <person name="Wanner B.L."/>
            <person name="Mori H."/>
            <person name="Horiuchi T."/>
        </authorList>
    </citation>
    <scope>NUCLEOTIDE SEQUENCE [LARGE SCALE GENOMIC DNA]</scope>
    <source>
        <strain>K12 / W3110 / ATCC 27325 / DSM 5911</strain>
    </source>
</reference>
<reference key="5">
    <citation type="journal article" date="1993" name="Mol. Gen. Genet.">
        <title>Function of the Escherichia coli nucleoid protein, H-NS: molecular analysis of a subset of proteins whose expression is enhanced in a hns deletion mutant.</title>
        <authorList>
            <person name="Yoshida T."/>
            <person name="Ueguchi C."/>
            <person name="Yamada H."/>
            <person name="Mizuno T."/>
        </authorList>
    </citation>
    <scope>NUCLEOTIDE SEQUENCE [GENOMIC DNA] OF 1-106</scope>
    <source>
        <strain>K12</strain>
    </source>
</reference>
<reference key="6">
    <citation type="journal article" date="2005" name="Science">
        <title>Global topology analysis of the Escherichia coli inner membrane proteome.</title>
        <authorList>
            <person name="Daley D.O."/>
            <person name="Rapp M."/>
            <person name="Granseth E."/>
            <person name="Melen K."/>
            <person name="Drew D."/>
            <person name="von Heijne G."/>
        </authorList>
    </citation>
    <scope>TOPOLOGY [LARGE SCALE ANALYSIS]</scope>
    <source>
        <strain>K12 / MG1655 / ATCC 47076</strain>
    </source>
</reference>
<proteinExistence type="evidence at protein level"/>